<feature type="chain" id="PRO_0000118754" description="NAD(P)H-quinone oxidoreductase subunit K, chloroplastic">
    <location>
        <begin position="1"/>
        <end position="212"/>
    </location>
</feature>
<feature type="binding site" evidence="1">
    <location>
        <position position="43"/>
    </location>
    <ligand>
        <name>[4Fe-4S] cluster</name>
        <dbReference type="ChEBI" id="CHEBI:49883"/>
    </ligand>
</feature>
<feature type="binding site" evidence="1">
    <location>
        <position position="44"/>
    </location>
    <ligand>
        <name>[4Fe-4S] cluster</name>
        <dbReference type="ChEBI" id="CHEBI:49883"/>
    </ligand>
</feature>
<feature type="binding site" evidence="1">
    <location>
        <position position="108"/>
    </location>
    <ligand>
        <name>[4Fe-4S] cluster</name>
        <dbReference type="ChEBI" id="CHEBI:49883"/>
    </ligand>
</feature>
<feature type="binding site" evidence="1">
    <location>
        <position position="139"/>
    </location>
    <ligand>
        <name>[4Fe-4S] cluster</name>
        <dbReference type="ChEBI" id="CHEBI:49883"/>
    </ligand>
</feature>
<feature type="sequence conflict" description="In Ref. 2; CAA45612." evidence="2" ref="2">
    <original>N</original>
    <variation>I</variation>
    <location>
        <position position="23"/>
    </location>
</feature>
<feature type="sequence conflict" description="In Ref. 2; CAA45612." evidence="2" ref="2">
    <original>S</original>
    <variation>P</variation>
    <location>
        <position position="32"/>
    </location>
</feature>
<feature type="sequence conflict" description="In Ref. 2; CAA45612." evidence="2" ref="2">
    <original>A</original>
    <variation>V</variation>
    <location>
        <position position="78"/>
    </location>
</feature>
<feature type="sequence conflict" description="In Ref. 2; CAA45612." evidence="2" ref="2">
    <original>P</original>
    <variation>T</variation>
    <location>
        <position position="141"/>
    </location>
</feature>
<feature type="sequence conflict" description="In Ref. 2; CAA45612." evidence="2" ref="2">
    <original>K</original>
    <variation>E</variation>
    <location>
        <position position="156"/>
    </location>
</feature>
<feature type="sequence conflict" description="In Ref. 2; CAA45612." evidence="2" ref="2">
    <original>F</original>
    <variation>FKVQLEIAIPFFLITS</variation>
    <location>
        <position position="212"/>
    </location>
</feature>
<proteinExistence type="evidence at transcript level"/>
<geneLocation type="chloroplast"/>
<reference key="1">
    <citation type="journal article" date="2005" name="Plant Mol. Biol.">
        <title>Complete chloroplast genome sequence of Glycine max and comparative analyses with other legume genomes.</title>
        <authorList>
            <person name="Saski C."/>
            <person name="Lee S.-B."/>
            <person name="Daniell H."/>
            <person name="Wood T.C."/>
            <person name="Tomkins J."/>
            <person name="Kim H.-G."/>
            <person name="Jansen R.K."/>
        </authorList>
    </citation>
    <scope>NUCLEOTIDE SEQUENCE [LARGE SCALE GENOMIC DNA]</scope>
    <source>
        <strain>cv. PI 437654</strain>
    </source>
</reference>
<reference key="2">
    <citation type="journal article" date="1992" name="Plant Mol. Biol.">
        <title>Cloning of ndhK from soybean chloroplasts using antibodies raised to mitochondrial complex I.</title>
        <authorList>
            <person name="Whelan J."/>
            <person name="Young S."/>
            <person name="Day D.A."/>
        </authorList>
    </citation>
    <scope>NUCLEOTIDE SEQUENCE [MRNA] OF 4-212</scope>
    <source>
        <strain>cv. Saxa</strain>
    </source>
</reference>
<protein>
    <recommendedName>
        <fullName evidence="1">NAD(P)H-quinone oxidoreductase subunit K, chloroplastic</fullName>
        <ecNumber evidence="1">7.1.1.-</ecNumber>
    </recommendedName>
    <alternativeName>
        <fullName evidence="1">NAD(P)H dehydrogenase subunit K</fullName>
    </alternativeName>
    <alternativeName>
        <fullName evidence="1">NADH-plastoquinone oxidoreductase subunit K</fullName>
    </alternativeName>
</protein>
<accession>P31175</accession>
<accession>Q2PMU7</accession>
<evidence type="ECO:0000255" key="1">
    <source>
        <dbReference type="HAMAP-Rule" id="MF_01356"/>
    </source>
</evidence>
<evidence type="ECO:0000305" key="2"/>
<organism>
    <name type="scientific">Glycine max</name>
    <name type="common">Soybean</name>
    <name type="synonym">Glycine hispida</name>
    <dbReference type="NCBI Taxonomy" id="3847"/>
    <lineage>
        <taxon>Eukaryota</taxon>
        <taxon>Viridiplantae</taxon>
        <taxon>Streptophyta</taxon>
        <taxon>Embryophyta</taxon>
        <taxon>Tracheophyta</taxon>
        <taxon>Spermatophyta</taxon>
        <taxon>Magnoliopsida</taxon>
        <taxon>eudicotyledons</taxon>
        <taxon>Gunneridae</taxon>
        <taxon>Pentapetalae</taxon>
        <taxon>rosids</taxon>
        <taxon>fabids</taxon>
        <taxon>Fabales</taxon>
        <taxon>Fabaceae</taxon>
        <taxon>Papilionoideae</taxon>
        <taxon>50 kb inversion clade</taxon>
        <taxon>NPAAA clade</taxon>
        <taxon>indigoferoid/millettioid clade</taxon>
        <taxon>Phaseoleae</taxon>
        <taxon>Glycine</taxon>
        <taxon>Glycine subgen. Soja</taxon>
    </lineage>
</organism>
<dbReference type="EC" id="7.1.1.-" evidence="1"/>
<dbReference type="EMBL" id="DQ317523">
    <property type="protein sequence ID" value="ABC25111.1"/>
    <property type="molecule type" value="Genomic_DNA"/>
</dbReference>
<dbReference type="EMBL" id="X64329">
    <property type="protein sequence ID" value="CAA45612.1"/>
    <property type="molecule type" value="mRNA"/>
</dbReference>
<dbReference type="PIR" id="S27978">
    <property type="entry name" value="S27978"/>
</dbReference>
<dbReference type="RefSeq" id="YP_538751.1">
    <property type="nucleotide sequence ID" value="NC_007942.1"/>
</dbReference>
<dbReference type="SMR" id="P31175"/>
<dbReference type="FunCoup" id="P31175">
    <property type="interactions" value="56"/>
</dbReference>
<dbReference type="STRING" id="3847.P31175"/>
<dbReference type="PaxDb" id="3847-GLYMA08G05521.1"/>
<dbReference type="GeneID" id="3989277"/>
<dbReference type="KEGG" id="gmx:3989277"/>
<dbReference type="eggNOG" id="KOG1687">
    <property type="taxonomic scope" value="Eukaryota"/>
</dbReference>
<dbReference type="InParanoid" id="P31175"/>
<dbReference type="Proteomes" id="UP000008827">
    <property type="component" value="Chloroplast"/>
</dbReference>
<dbReference type="GO" id="GO:0009535">
    <property type="term" value="C:chloroplast thylakoid membrane"/>
    <property type="evidence" value="ECO:0007669"/>
    <property type="project" value="UniProtKB-SubCell"/>
</dbReference>
<dbReference type="GO" id="GO:0045271">
    <property type="term" value="C:respiratory chain complex I"/>
    <property type="evidence" value="ECO:0000318"/>
    <property type="project" value="GO_Central"/>
</dbReference>
<dbReference type="GO" id="GO:0051539">
    <property type="term" value="F:4 iron, 4 sulfur cluster binding"/>
    <property type="evidence" value="ECO:0007669"/>
    <property type="project" value="UniProtKB-KW"/>
</dbReference>
<dbReference type="GO" id="GO:0005506">
    <property type="term" value="F:iron ion binding"/>
    <property type="evidence" value="ECO:0007669"/>
    <property type="project" value="UniProtKB-UniRule"/>
</dbReference>
<dbReference type="GO" id="GO:0008137">
    <property type="term" value="F:NADH dehydrogenase (ubiquinone) activity"/>
    <property type="evidence" value="ECO:0000318"/>
    <property type="project" value="GO_Central"/>
</dbReference>
<dbReference type="GO" id="GO:0048038">
    <property type="term" value="F:quinone binding"/>
    <property type="evidence" value="ECO:0007669"/>
    <property type="project" value="UniProtKB-KW"/>
</dbReference>
<dbReference type="GO" id="GO:0009060">
    <property type="term" value="P:aerobic respiration"/>
    <property type="evidence" value="ECO:0000318"/>
    <property type="project" value="GO_Central"/>
</dbReference>
<dbReference type="GO" id="GO:0015990">
    <property type="term" value="P:electron transport coupled proton transport"/>
    <property type="evidence" value="ECO:0000318"/>
    <property type="project" value="GO_Central"/>
</dbReference>
<dbReference type="GO" id="GO:0019684">
    <property type="term" value="P:photosynthesis, light reaction"/>
    <property type="evidence" value="ECO:0007669"/>
    <property type="project" value="UniProtKB-UniRule"/>
</dbReference>
<dbReference type="FunFam" id="3.40.50.12280:FF:000003">
    <property type="entry name" value="NAD(P)H-quinone oxidoreductase subunit K, chloroplastic"/>
    <property type="match status" value="1"/>
</dbReference>
<dbReference type="Gene3D" id="3.40.50.12280">
    <property type="match status" value="1"/>
</dbReference>
<dbReference type="HAMAP" id="MF_01356">
    <property type="entry name" value="NDH1_NuoB"/>
    <property type="match status" value="1"/>
</dbReference>
<dbReference type="InterPro" id="IPR006137">
    <property type="entry name" value="NADH_UbQ_OxRdtase-like_20kDa"/>
</dbReference>
<dbReference type="InterPro" id="IPR006138">
    <property type="entry name" value="NADH_UQ_OxRdtase_20Kd_su"/>
</dbReference>
<dbReference type="NCBIfam" id="TIGR01957">
    <property type="entry name" value="nuoB_fam"/>
    <property type="match status" value="1"/>
</dbReference>
<dbReference type="NCBIfam" id="NF005012">
    <property type="entry name" value="PRK06411.1"/>
    <property type="match status" value="1"/>
</dbReference>
<dbReference type="PANTHER" id="PTHR11995">
    <property type="entry name" value="NADH DEHYDROGENASE"/>
    <property type="match status" value="1"/>
</dbReference>
<dbReference type="PANTHER" id="PTHR11995:SF14">
    <property type="entry name" value="NADH DEHYDROGENASE [UBIQUINONE] IRON-SULFUR PROTEIN 7, MITOCHONDRIAL"/>
    <property type="match status" value="1"/>
</dbReference>
<dbReference type="Pfam" id="PF01058">
    <property type="entry name" value="Oxidored_q6"/>
    <property type="match status" value="1"/>
</dbReference>
<dbReference type="SUPFAM" id="SSF56770">
    <property type="entry name" value="HydA/Nqo6-like"/>
    <property type="match status" value="1"/>
</dbReference>
<dbReference type="PROSITE" id="PS01150">
    <property type="entry name" value="COMPLEX1_20K"/>
    <property type="match status" value="1"/>
</dbReference>
<keyword id="KW-0004">4Fe-4S</keyword>
<keyword id="KW-0150">Chloroplast</keyword>
<keyword id="KW-0408">Iron</keyword>
<keyword id="KW-0411">Iron-sulfur</keyword>
<keyword id="KW-0472">Membrane</keyword>
<keyword id="KW-0479">Metal-binding</keyword>
<keyword id="KW-0520">NAD</keyword>
<keyword id="KW-0521">NADP</keyword>
<keyword id="KW-0934">Plastid</keyword>
<keyword id="KW-0618">Plastoquinone</keyword>
<keyword id="KW-0874">Quinone</keyword>
<keyword id="KW-1185">Reference proteome</keyword>
<keyword id="KW-0793">Thylakoid</keyword>
<keyword id="KW-1278">Translocase</keyword>
<keyword id="KW-0813">Transport</keyword>
<comment type="function">
    <text evidence="1">NDH shuttles electrons from NAD(P)H:plastoquinone, via FMN and iron-sulfur (Fe-S) centers, to quinones in the photosynthetic chain and possibly in a chloroplast respiratory chain. The immediate electron acceptor for the enzyme in this species is believed to be plastoquinone. Couples the redox reaction to proton translocation, and thus conserves the redox energy in a proton gradient.</text>
</comment>
<comment type="catalytic activity">
    <reaction evidence="1">
        <text>a plastoquinone + NADH + (n+1) H(+)(in) = a plastoquinol + NAD(+) + n H(+)(out)</text>
        <dbReference type="Rhea" id="RHEA:42608"/>
        <dbReference type="Rhea" id="RHEA-COMP:9561"/>
        <dbReference type="Rhea" id="RHEA-COMP:9562"/>
        <dbReference type="ChEBI" id="CHEBI:15378"/>
        <dbReference type="ChEBI" id="CHEBI:17757"/>
        <dbReference type="ChEBI" id="CHEBI:57540"/>
        <dbReference type="ChEBI" id="CHEBI:57945"/>
        <dbReference type="ChEBI" id="CHEBI:62192"/>
    </reaction>
</comment>
<comment type="catalytic activity">
    <reaction evidence="1">
        <text>a plastoquinone + NADPH + (n+1) H(+)(in) = a plastoquinol + NADP(+) + n H(+)(out)</text>
        <dbReference type="Rhea" id="RHEA:42612"/>
        <dbReference type="Rhea" id="RHEA-COMP:9561"/>
        <dbReference type="Rhea" id="RHEA-COMP:9562"/>
        <dbReference type="ChEBI" id="CHEBI:15378"/>
        <dbReference type="ChEBI" id="CHEBI:17757"/>
        <dbReference type="ChEBI" id="CHEBI:57783"/>
        <dbReference type="ChEBI" id="CHEBI:58349"/>
        <dbReference type="ChEBI" id="CHEBI:62192"/>
    </reaction>
</comment>
<comment type="cofactor">
    <cofactor evidence="1">
        <name>[4Fe-4S] cluster</name>
        <dbReference type="ChEBI" id="CHEBI:49883"/>
    </cofactor>
    <text evidence="1">Binds 1 [4Fe-4S] cluster.</text>
</comment>
<comment type="subunit">
    <text evidence="1">NDH is composed of at least 16 different subunits, 5 of which are encoded in the nucleus.</text>
</comment>
<comment type="subcellular location">
    <subcellularLocation>
        <location evidence="1">Plastid</location>
        <location evidence="1">Chloroplast thylakoid membrane</location>
        <topology evidence="1">Peripheral membrane protein</topology>
        <orientation evidence="1">Stromal side</orientation>
    </subcellularLocation>
</comment>
<comment type="similarity">
    <text evidence="1">Belongs to the complex I 20 kDa subunit family.</text>
</comment>
<name>NDHK_SOYBN</name>
<sequence>MNSIEFPLLDQTTKNSVISTTLNDLSNWSRLSSLWPLLYGTSCCFIEFASLIGSRFDFDRYGLVPRSSPRQADLILTAGTVTMKMAPSLVRLYEQMPEPKYVIAMGACTITGGMFSTDSYSTVRGVDKLIPVDVYLPGCPPKPEAIIDAITKLRKKISREIYENQMSSQRENRCFTTNHKFHIGYSTHTGNYGQELFYQLPSTSEIPSDTFF</sequence>
<gene>
    <name evidence="1" type="primary">ndhK</name>
    <name type="synonym">psbG</name>
</gene>